<evidence type="ECO:0000255" key="1">
    <source>
        <dbReference type="HAMAP-Rule" id="MF_01306"/>
    </source>
</evidence>
<evidence type="ECO:0000305" key="2"/>
<comment type="function">
    <text evidence="1">One of the primary rRNA binding proteins, it binds directly to 16S rRNA where it nucleates assembly of the body of the 30S subunit.</text>
</comment>
<comment type="function">
    <text evidence="1">With S5 and S12 plays an important role in translational accuracy.</text>
</comment>
<comment type="subunit">
    <text evidence="1">Part of the 30S ribosomal subunit. Contacts protein S5. The interaction surface between S4 and S5 is involved in control of translational fidelity.</text>
</comment>
<comment type="similarity">
    <text evidence="1">Belongs to the universal ribosomal protein uS4 family.</text>
</comment>
<protein>
    <recommendedName>
        <fullName evidence="1">Small ribosomal subunit protein uS4</fullName>
    </recommendedName>
    <alternativeName>
        <fullName evidence="2">30S ribosomal protein S4</fullName>
    </alternativeName>
</protein>
<organism>
    <name type="scientific">Akkermansia muciniphila (strain ATCC BAA-835 / DSM 22959 / JCM 33894 / BCRC 81048 / CCUG 64013 / CIP 107961 / Muc)</name>
    <dbReference type="NCBI Taxonomy" id="349741"/>
    <lineage>
        <taxon>Bacteria</taxon>
        <taxon>Pseudomonadati</taxon>
        <taxon>Verrucomicrobiota</taxon>
        <taxon>Verrucomicrobiia</taxon>
        <taxon>Verrucomicrobiales</taxon>
        <taxon>Akkermansiaceae</taxon>
        <taxon>Akkermansia</taxon>
    </lineage>
</organism>
<dbReference type="EMBL" id="CP001071">
    <property type="protein sequence ID" value="ACD04275.1"/>
    <property type="molecule type" value="Genomic_DNA"/>
</dbReference>
<dbReference type="RefSeq" id="WP_012419490.1">
    <property type="nucleotide sequence ID" value="NZ_CP071807.1"/>
</dbReference>
<dbReference type="SMR" id="B2UNG3"/>
<dbReference type="STRING" id="349741.Amuc_0437"/>
<dbReference type="PaxDb" id="349741-Amuc_0437"/>
<dbReference type="GeneID" id="60879907"/>
<dbReference type="KEGG" id="amu:Amuc_0437"/>
<dbReference type="eggNOG" id="COG0522">
    <property type="taxonomic scope" value="Bacteria"/>
</dbReference>
<dbReference type="HOGENOM" id="CLU_092403_0_1_0"/>
<dbReference type="OrthoDB" id="9803672at2"/>
<dbReference type="BioCyc" id="AMUC349741:G1GBX-483-MONOMER"/>
<dbReference type="Proteomes" id="UP000001031">
    <property type="component" value="Chromosome"/>
</dbReference>
<dbReference type="GO" id="GO:0015935">
    <property type="term" value="C:small ribosomal subunit"/>
    <property type="evidence" value="ECO:0007669"/>
    <property type="project" value="InterPro"/>
</dbReference>
<dbReference type="GO" id="GO:0019843">
    <property type="term" value="F:rRNA binding"/>
    <property type="evidence" value="ECO:0007669"/>
    <property type="project" value="UniProtKB-UniRule"/>
</dbReference>
<dbReference type="GO" id="GO:0003735">
    <property type="term" value="F:structural constituent of ribosome"/>
    <property type="evidence" value="ECO:0007669"/>
    <property type="project" value="InterPro"/>
</dbReference>
<dbReference type="GO" id="GO:0042274">
    <property type="term" value="P:ribosomal small subunit biogenesis"/>
    <property type="evidence" value="ECO:0007669"/>
    <property type="project" value="TreeGrafter"/>
</dbReference>
<dbReference type="GO" id="GO:0006412">
    <property type="term" value="P:translation"/>
    <property type="evidence" value="ECO:0007669"/>
    <property type="project" value="UniProtKB-UniRule"/>
</dbReference>
<dbReference type="CDD" id="cd00165">
    <property type="entry name" value="S4"/>
    <property type="match status" value="1"/>
</dbReference>
<dbReference type="FunFam" id="3.10.290.10:FF:000001">
    <property type="entry name" value="30S ribosomal protein S4"/>
    <property type="match status" value="1"/>
</dbReference>
<dbReference type="Gene3D" id="1.10.1050.10">
    <property type="entry name" value="Ribosomal Protein S4 Delta 41, Chain A, domain 1"/>
    <property type="match status" value="1"/>
</dbReference>
<dbReference type="Gene3D" id="3.10.290.10">
    <property type="entry name" value="RNA-binding S4 domain"/>
    <property type="match status" value="1"/>
</dbReference>
<dbReference type="HAMAP" id="MF_01306_B">
    <property type="entry name" value="Ribosomal_uS4_B"/>
    <property type="match status" value="1"/>
</dbReference>
<dbReference type="InterPro" id="IPR022801">
    <property type="entry name" value="Ribosomal_uS4"/>
</dbReference>
<dbReference type="InterPro" id="IPR005709">
    <property type="entry name" value="Ribosomal_uS4_bac-type"/>
</dbReference>
<dbReference type="InterPro" id="IPR018079">
    <property type="entry name" value="Ribosomal_uS4_CS"/>
</dbReference>
<dbReference type="InterPro" id="IPR001912">
    <property type="entry name" value="Ribosomal_uS4_N"/>
</dbReference>
<dbReference type="InterPro" id="IPR002942">
    <property type="entry name" value="S4_RNA-bd"/>
</dbReference>
<dbReference type="InterPro" id="IPR036986">
    <property type="entry name" value="S4_RNA-bd_sf"/>
</dbReference>
<dbReference type="NCBIfam" id="NF003717">
    <property type="entry name" value="PRK05327.1"/>
    <property type="match status" value="1"/>
</dbReference>
<dbReference type="NCBIfam" id="TIGR01017">
    <property type="entry name" value="rpsD_bact"/>
    <property type="match status" value="1"/>
</dbReference>
<dbReference type="PANTHER" id="PTHR11831">
    <property type="entry name" value="30S 40S RIBOSOMAL PROTEIN"/>
    <property type="match status" value="1"/>
</dbReference>
<dbReference type="PANTHER" id="PTHR11831:SF4">
    <property type="entry name" value="SMALL RIBOSOMAL SUBUNIT PROTEIN US4M"/>
    <property type="match status" value="1"/>
</dbReference>
<dbReference type="Pfam" id="PF00163">
    <property type="entry name" value="Ribosomal_S4"/>
    <property type="match status" value="1"/>
</dbReference>
<dbReference type="Pfam" id="PF01479">
    <property type="entry name" value="S4"/>
    <property type="match status" value="1"/>
</dbReference>
<dbReference type="SMART" id="SM01390">
    <property type="entry name" value="Ribosomal_S4"/>
    <property type="match status" value="1"/>
</dbReference>
<dbReference type="SMART" id="SM00363">
    <property type="entry name" value="S4"/>
    <property type="match status" value="1"/>
</dbReference>
<dbReference type="SUPFAM" id="SSF55174">
    <property type="entry name" value="Alpha-L RNA-binding motif"/>
    <property type="match status" value="1"/>
</dbReference>
<dbReference type="PROSITE" id="PS00632">
    <property type="entry name" value="RIBOSOMAL_S4"/>
    <property type="match status" value="1"/>
</dbReference>
<dbReference type="PROSITE" id="PS50889">
    <property type="entry name" value="S4"/>
    <property type="match status" value="1"/>
</dbReference>
<keyword id="KW-1185">Reference proteome</keyword>
<keyword id="KW-0687">Ribonucleoprotein</keyword>
<keyword id="KW-0689">Ribosomal protein</keyword>
<keyword id="KW-0694">RNA-binding</keyword>
<keyword id="KW-0699">rRNA-binding</keyword>
<name>RS4_AKKM8</name>
<gene>
    <name evidence="1" type="primary">rpsD</name>
    <name type="ordered locus">Amuc_0437</name>
</gene>
<sequence length="203" mass="22801">MARYTGPRDKVSRRFGVALFGSTKALEKRPFPPGQHGMRAGRKKKSDYGVMLAEKQKLRFQYGVLEGQFRKYYAEAARRRGITGDILLQLLELRLDNVVYRLGFSNTRAGARQLVSHGHITVNGKKTNIASYSCRPGDVIAVGGKASSQQLVTRFLDLTQATVVPDWLECDRDKLTGKIARVPSKEEIAPIVNEQLIVEFYSR</sequence>
<feature type="chain" id="PRO_1000140677" description="Small ribosomal subunit protein uS4">
    <location>
        <begin position="1"/>
        <end position="203"/>
    </location>
</feature>
<feature type="domain" description="S4 RNA-binding" evidence="1">
    <location>
        <begin position="93"/>
        <end position="158"/>
    </location>
</feature>
<reference key="1">
    <citation type="journal article" date="2011" name="PLoS ONE">
        <title>The genome of Akkermansia muciniphila, a dedicated intestinal mucin degrader, and its use in exploring intestinal metagenomes.</title>
        <authorList>
            <person name="van Passel M.W."/>
            <person name="Kant R."/>
            <person name="Zoetendal E.G."/>
            <person name="Plugge C.M."/>
            <person name="Derrien M."/>
            <person name="Malfatti S.A."/>
            <person name="Chain P.S."/>
            <person name="Woyke T."/>
            <person name="Palva A."/>
            <person name="de Vos W.M."/>
            <person name="Smidt H."/>
        </authorList>
    </citation>
    <scope>NUCLEOTIDE SEQUENCE [LARGE SCALE GENOMIC DNA]</scope>
    <source>
        <strain>ATCC BAA-835 / DSM 22959 / JCM 33894 / BCRC 81048 / CCUG 64013 / CIP 107961 / Muc</strain>
    </source>
</reference>
<accession>B2UNG3</accession>
<proteinExistence type="inferred from homology"/>